<comment type="function">
    <text evidence="1">Component of the cytochrome b6-f complex, which mediates electron transfer between photosystem II (PSII) and photosystem I (PSI), cyclic electron flow around PSI, and state transitions. PetL is important for photoautotrophic growth as well as for electron transfer efficiency and stability of the cytochrome b6-f complex.</text>
</comment>
<comment type="subunit">
    <text evidence="1">The 4 large subunits of the cytochrome b6-f complex are cytochrome b6, subunit IV (17 kDa polypeptide, PetD), cytochrome f and the Rieske protein, while the 4 small subunits are PetG, PetL, PetM and PetN. The complex functions as a dimer.</text>
</comment>
<comment type="subcellular location">
    <subcellularLocation>
        <location evidence="1">Plastid</location>
        <location evidence="1">Chloroplast thylakoid membrane</location>
        <topology evidence="1">Single-pass membrane protein</topology>
    </subcellularLocation>
</comment>
<comment type="RNA editing">
    <location>
        <position position="19" evidence="2"/>
    </location>
</comment>
<comment type="similarity">
    <text evidence="1">Belongs to the PetL family.</text>
</comment>
<sequence>MLTLTSYFGFLLAALTITLALFIGLNKIRLI</sequence>
<reference key="1">
    <citation type="journal article" date="2000" name="Plant Mol. Biol. Rep.">
        <title>Chinese spring wheat (Triticum aestivum L.) chloroplast genome: complete sequence and contig clones.</title>
        <authorList>
            <person name="Ogihara Y."/>
            <person name="Isono K."/>
            <person name="Kojima T."/>
            <person name="Endo A."/>
            <person name="Hanaoka M."/>
            <person name="Shiina T."/>
            <person name="Terachi T."/>
            <person name="Utsugi S."/>
            <person name="Murata M."/>
            <person name="Mori N."/>
            <person name="Takumi S."/>
            <person name="Ikeo K."/>
            <person name="Gojobori T."/>
            <person name="Murai R."/>
            <person name="Murai K."/>
            <person name="Matsuoka Y."/>
            <person name="Ohnishi Y."/>
            <person name="Tajiri H."/>
            <person name="Tsunewaki K."/>
        </authorList>
    </citation>
    <scope>NUCLEOTIDE SEQUENCE [LARGE SCALE GENOMIC DNA]</scope>
    <source>
        <strain>cv. Chinese Spring</strain>
    </source>
</reference>
<reference key="2">
    <citation type="journal article" date="2004" name="Nucleic Acids Res.">
        <title>Rapid evolution of RNA editing sites in a small non-essential plastid gene.</title>
        <authorList>
            <person name="Fiebig A."/>
            <person name="Stegemann S."/>
            <person name="Bock R."/>
        </authorList>
    </citation>
    <scope>NUCLEOTIDE SEQUENCE [GENOMIC DNA]</scope>
    <scope>RNA EDITING</scope>
    <source>
        <tissue>Leaf</tissue>
    </source>
</reference>
<protein>
    <recommendedName>
        <fullName evidence="1">Cytochrome b6-f complex subunit 6</fullName>
    </recommendedName>
    <alternativeName>
        <fullName evidence="1">Cytochrome b6-f complex subunit PetL</fullName>
    </alternativeName>
    <alternativeName>
        <fullName evidence="1">Cytochrome b6-f complex subunit VI</fullName>
    </alternativeName>
</protein>
<name>PETL_WHEAT</name>
<evidence type="ECO:0000255" key="1">
    <source>
        <dbReference type="HAMAP-Rule" id="MF_00433"/>
    </source>
</evidence>
<evidence type="ECO:0000269" key="2">
    <source>
    </source>
</evidence>
<evidence type="ECO:0000305" key="3"/>
<keyword id="KW-0150">Chloroplast</keyword>
<keyword id="KW-0249">Electron transport</keyword>
<keyword id="KW-0472">Membrane</keyword>
<keyword id="KW-0602">Photosynthesis</keyword>
<keyword id="KW-0934">Plastid</keyword>
<keyword id="KW-1185">Reference proteome</keyword>
<keyword id="KW-0691">RNA editing</keyword>
<keyword id="KW-0793">Thylakoid</keyword>
<keyword id="KW-0812">Transmembrane</keyword>
<keyword id="KW-1133">Transmembrane helix</keyword>
<keyword id="KW-0813">Transport</keyword>
<dbReference type="EMBL" id="AB042240">
    <property type="protein sequence ID" value="BAB47051.1"/>
    <property type="status" value="ALT_SEQ"/>
    <property type="molecule type" value="Genomic_DNA"/>
</dbReference>
<dbReference type="EMBL" id="AJ704415">
    <property type="protein sequence ID" value="CAG28627.1"/>
    <property type="molecule type" value="Genomic_DNA"/>
</dbReference>
<dbReference type="RefSeq" id="NP_114276.1">
    <property type="nucleotide sequence ID" value="NC_002762.1"/>
</dbReference>
<dbReference type="SMR" id="P58247"/>
<dbReference type="PaxDb" id="4565-Traes_2AS_1800EA035.1"/>
<dbReference type="GeneID" id="803178"/>
<dbReference type="KEGG" id="taes:803178"/>
<dbReference type="eggNOG" id="ENOG502SCY6">
    <property type="taxonomic scope" value="Eukaryota"/>
</dbReference>
<dbReference type="OrthoDB" id="622343at2759"/>
<dbReference type="Proteomes" id="UP000019116">
    <property type="component" value="Chloroplast"/>
</dbReference>
<dbReference type="GO" id="GO:0009535">
    <property type="term" value="C:chloroplast thylakoid membrane"/>
    <property type="evidence" value="ECO:0007669"/>
    <property type="project" value="UniProtKB-SubCell"/>
</dbReference>
<dbReference type="GO" id="GO:0009512">
    <property type="term" value="C:cytochrome b6f complex"/>
    <property type="evidence" value="ECO:0007669"/>
    <property type="project" value="InterPro"/>
</dbReference>
<dbReference type="GO" id="GO:0045158">
    <property type="term" value="F:electron transporter, transferring electrons within cytochrome b6/f complex of photosystem II activity"/>
    <property type="evidence" value="ECO:0007669"/>
    <property type="project" value="UniProtKB-UniRule"/>
</dbReference>
<dbReference type="GO" id="GO:0015979">
    <property type="term" value="P:photosynthesis"/>
    <property type="evidence" value="ECO:0007669"/>
    <property type="project" value="UniProtKB-KW"/>
</dbReference>
<dbReference type="HAMAP" id="MF_00433">
    <property type="entry name" value="Cytb6_f_PetL"/>
    <property type="match status" value="1"/>
</dbReference>
<dbReference type="InterPro" id="IPR007802">
    <property type="entry name" value="Cyt_b6/f_cplx_su6"/>
</dbReference>
<dbReference type="PANTHER" id="PTHR37266">
    <property type="entry name" value="CYTOCHROME B6-F COMPLEX SUBUNIT 6"/>
    <property type="match status" value="1"/>
</dbReference>
<dbReference type="PANTHER" id="PTHR37266:SF1">
    <property type="entry name" value="CYTOCHROME B6-F COMPLEX SUBUNIT 6"/>
    <property type="match status" value="1"/>
</dbReference>
<dbReference type="Pfam" id="PF05115">
    <property type="entry name" value="PetL"/>
    <property type="match status" value="1"/>
</dbReference>
<dbReference type="SUPFAM" id="SSF103436">
    <property type="entry name" value="PetL subunit of the cytochrome b6f complex"/>
    <property type="match status" value="1"/>
</dbReference>
<gene>
    <name evidence="1" type="primary">petL</name>
</gene>
<geneLocation type="chloroplast"/>
<proteinExistence type="evidence at transcript level"/>
<accession>P58247</accession>
<accession>Q5K3U9</accession>
<organism>
    <name type="scientific">Triticum aestivum</name>
    <name type="common">Wheat</name>
    <dbReference type="NCBI Taxonomy" id="4565"/>
    <lineage>
        <taxon>Eukaryota</taxon>
        <taxon>Viridiplantae</taxon>
        <taxon>Streptophyta</taxon>
        <taxon>Embryophyta</taxon>
        <taxon>Tracheophyta</taxon>
        <taxon>Spermatophyta</taxon>
        <taxon>Magnoliopsida</taxon>
        <taxon>Liliopsida</taxon>
        <taxon>Poales</taxon>
        <taxon>Poaceae</taxon>
        <taxon>BOP clade</taxon>
        <taxon>Pooideae</taxon>
        <taxon>Triticodae</taxon>
        <taxon>Triticeae</taxon>
        <taxon>Triticinae</taxon>
        <taxon>Triticum</taxon>
    </lineage>
</organism>
<feature type="chain" id="PRO_0000220484" description="Cytochrome b6-f complex subunit 6">
    <location>
        <begin position="1"/>
        <end position="31"/>
    </location>
</feature>
<feature type="transmembrane region" description="Helical" evidence="1">
    <location>
        <begin position="4"/>
        <end position="24"/>
    </location>
</feature>
<feature type="sequence conflict" description="In Ref. 2; CAG28627." evidence="3" ref="2">
    <original>I</original>
    <variation>L</variation>
    <location>
        <position position="17"/>
    </location>
</feature>